<feature type="chain" id="PRO_0000076116" description="Lon protease 1">
    <location>
        <begin position="1"/>
        <end position="774"/>
    </location>
</feature>
<feature type="domain" description="Lon N-terminal" evidence="3">
    <location>
        <begin position="9"/>
        <end position="202"/>
    </location>
</feature>
<feature type="domain" description="Lon proteolytic" evidence="2">
    <location>
        <begin position="590"/>
        <end position="771"/>
    </location>
</feature>
<feature type="active site" evidence="1">
    <location>
        <position position="677"/>
    </location>
</feature>
<feature type="active site" evidence="1">
    <location>
        <position position="720"/>
    </location>
</feature>
<feature type="binding site">
    <location>
        <begin position="354"/>
        <end position="361"/>
    </location>
    <ligand>
        <name>ATP</name>
        <dbReference type="ChEBI" id="CHEBI:30616"/>
    </ligand>
</feature>
<feature type="strand" evidence="7">
    <location>
        <begin position="5"/>
        <end position="16"/>
    </location>
</feature>
<feature type="strand" evidence="7">
    <location>
        <begin position="24"/>
        <end position="29"/>
    </location>
</feature>
<feature type="helix" evidence="7">
    <location>
        <begin position="32"/>
        <end position="41"/>
    </location>
</feature>
<feature type="turn" evidence="7">
    <location>
        <begin position="42"/>
        <end position="45"/>
    </location>
</feature>
<feature type="strand" evidence="7">
    <location>
        <begin position="46"/>
        <end position="55"/>
    </location>
</feature>
<feature type="helix" evidence="7">
    <location>
        <begin position="63"/>
        <end position="65"/>
    </location>
</feature>
<feature type="strand" evidence="7">
    <location>
        <begin position="68"/>
        <end position="80"/>
    </location>
</feature>
<feature type="strand" evidence="7">
    <location>
        <begin position="86"/>
        <end position="103"/>
    </location>
</feature>
<feature type="strand" evidence="7">
    <location>
        <begin position="105"/>
        <end position="114"/>
    </location>
</feature>
<feature type="helix" evidence="7">
    <location>
        <begin position="124"/>
        <end position="155"/>
    </location>
</feature>
<feature type="helix" evidence="7">
    <location>
        <begin position="160"/>
        <end position="170"/>
    </location>
</feature>
<feature type="helix" evidence="7">
    <location>
        <begin position="175"/>
        <end position="182"/>
    </location>
</feature>
<feature type="helix" evidence="7">
    <location>
        <begin position="187"/>
        <end position="207"/>
    </location>
</feature>
<feature type="turn" evidence="8">
    <location>
        <begin position="248"/>
        <end position="250"/>
    </location>
</feature>
<feature type="helix" evidence="8">
    <location>
        <begin position="251"/>
        <end position="257"/>
    </location>
</feature>
<feature type="strand" evidence="8">
    <location>
        <begin position="258"/>
        <end position="260"/>
    </location>
</feature>
<feature type="helix" evidence="8">
    <location>
        <begin position="264"/>
        <end position="274"/>
    </location>
</feature>
<feature type="strand" evidence="8">
    <location>
        <begin position="280"/>
        <end position="282"/>
    </location>
</feature>
<feature type="turn" evidence="8">
    <location>
        <begin position="284"/>
        <end position="287"/>
    </location>
</feature>
<feature type="helix" evidence="8">
    <location>
        <begin position="288"/>
        <end position="298"/>
    </location>
</feature>
<feature type="turn" evidence="8">
    <location>
        <begin position="311"/>
        <end position="313"/>
    </location>
</feature>
<feature type="helix" evidence="8">
    <location>
        <begin position="314"/>
        <end position="316"/>
    </location>
</feature>
<feature type="helix" evidence="8">
    <location>
        <begin position="318"/>
        <end position="321"/>
    </location>
</feature>
<feature type="helix" evidence="8">
    <location>
        <begin position="326"/>
        <end position="341"/>
    </location>
</feature>
<feature type="strand" evidence="8">
    <location>
        <begin position="342"/>
        <end position="344"/>
    </location>
</feature>
<feature type="strand" evidence="8">
    <location>
        <begin position="349"/>
        <end position="359"/>
    </location>
</feature>
<feature type="helix" evidence="8">
    <location>
        <begin position="360"/>
        <end position="371"/>
    </location>
</feature>
<feature type="strand" evidence="8">
    <location>
        <begin position="374"/>
        <end position="378"/>
    </location>
</feature>
<feature type="helix" evidence="8">
    <location>
        <begin position="404"/>
        <end position="409"/>
    </location>
</feature>
<feature type="strand" evidence="8">
    <location>
        <begin position="413"/>
        <end position="425"/>
    </location>
</feature>
<feature type="helix" evidence="8">
    <location>
        <begin position="439"/>
        <end position="441"/>
    </location>
</feature>
<feature type="turn" evidence="8">
    <location>
        <begin position="444"/>
        <end position="448"/>
    </location>
</feature>
<feature type="strand" evidence="8">
    <location>
        <begin position="453"/>
        <end position="455"/>
    </location>
</feature>
<feature type="strand" evidence="8">
    <location>
        <begin position="465"/>
        <end position="469"/>
    </location>
</feature>
<feature type="turn" evidence="8">
    <location>
        <begin position="473"/>
        <end position="475"/>
    </location>
</feature>
<feature type="helix" evidence="8">
    <location>
        <begin position="478"/>
        <end position="483"/>
    </location>
</feature>
<feature type="strand" evidence="8">
    <location>
        <begin position="484"/>
        <end position="488"/>
    </location>
</feature>
<feature type="helix" evidence="8">
    <location>
        <begin position="494"/>
        <end position="503"/>
    </location>
</feature>
<feature type="helix" evidence="8">
    <location>
        <begin position="505"/>
        <end position="512"/>
    </location>
</feature>
<feature type="helix" evidence="8">
    <location>
        <begin position="517"/>
        <end position="519"/>
    </location>
</feature>
<feature type="helix" evidence="8">
    <location>
        <begin position="524"/>
        <end position="534"/>
    </location>
</feature>
<feature type="strand" evidence="8">
    <location>
        <begin position="538"/>
        <end position="540"/>
    </location>
</feature>
<feature type="helix" evidence="8">
    <location>
        <begin position="541"/>
        <end position="559"/>
    </location>
</feature>
<feature type="strand" evidence="6">
    <location>
        <begin position="560"/>
        <end position="562"/>
    </location>
</feature>
<feature type="turn" evidence="8">
    <location>
        <begin position="570"/>
        <end position="573"/>
    </location>
</feature>
<feature type="helix" evidence="8">
    <location>
        <begin position="574"/>
        <end position="577"/>
    </location>
</feature>
<feature type="turn" evidence="8">
    <location>
        <begin position="586"/>
        <end position="588"/>
    </location>
</feature>
<feature type="strand" evidence="8">
    <location>
        <begin position="592"/>
        <end position="602"/>
    </location>
</feature>
<feature type="strand" evidence="8">
    <location>
        <begin position="605"/>
        <end position="618"/>
    </location>
</feature>
<feature type="strand" evidence="8">
    <location>
        <begin position="622"/>
        <end position="627"/>
    </location>
</feature>
<feature type="helix" evidence="8">
    <location>
        <begin position="630"/>
        <end position="643"/>
    </location>
</feature>
<feature type="helix" evidence="8">
    <location>
        <begin position="648"/>
        <end position="650"/>
    </location>
</feature>
<feature type="turn" evidence="8">
    <location>
        <begin position="657"/>
        <end position="659"/>
    </location>
</feature>
<feature type="strand" evidence="8">
    <location>
        <begin position="661"/>
        <end position="666"/>
    </location>
</feature>
<feature type="helix" evidence="8">
    <location>
        <begin position="672"/>
        <end position="678"/>
    </location>
</feature>
<feature type="helix" evidence="8">
    <location>
        <begin position="679"/>
        <end position="690"/>
    </location>
</feature>
<feature type="strand" evidence="8">
    <location>
        <begin position="710"/>
        <end position="712"/>
    </location>
</feature>
<feature type="helix" evidence="8">
    <location>
        <begin position="717"/>
        <end position="726"/>
    </location>
</feature>
<feature type="strand" evidence="8">
    <location>
        <begin position="730"/>
        <end position="735"/>
    </location>
</feature>
<feature type="helix" evidence="8">
    <location>
        <begin position="736"/>
        <end position="744"/>
    </location>
</feature>
<feature type="helix" evidence="8">
    <location>
        <begin position="747"/>
        <end position="750"/>
    </location>
</feature>
<feature type="strand" evidence="8">
    <location>
        <begin position="757"/>
        <end position="760"/>
    </location>
</feature>
<feature type="helix" evidence="8">
    <location>
        <begin position="761"/>
        <end position="768"/>
    </location>
</feature>
<comment type="function">
    <text evidence="1">ATP-dependent serine protease that mediates the selective degradation of mutant and abnormal proteins as well as certain short-lived regulatory proteins. Required for cellular homeostasis and for survival from DNA damage and developmental changes induced by stress. Degrades polypeptides processively to yield small peptide fragments that are 5 to 10 amino acids long. Binds to DNA in a double-stranded, site-specific manner (By similarity). Has been implicated in preventing sigma(G) activity under non-sporulation conditions.</text>
</comment>
<comment type="catalytic activity">
    <reaction evidence="1">
        <text>Hydrolysis of proteins in presence of ATP.</text>
        <dbReference type="EC" id="3.4.21.53"/>
    </reaction>
</comment>
<comment type="subunit">
    <text evidence="1 4">Homohexamer. Organized in a ring with a central cavity (By similarity). Exists as a mixture of small oligomeric species in solution.</text>
</comment>
<comment type="subcellular location">
    <subcellularLocation>
        <location>Cytoplasm</location>
    </subcellularLocation>
</comment>
<comment type="induction">
    <text evidence="1 5">By heat shock.</text>
</comment>
<comment type="similarity">
    <text evidence="1">Belongs to the peptidase S16 family.</text>
</comment>
<proteinExistence type="evidence at protein level"/>
<sequence length="774" mass="86607">MAEELKRSIPLLPLRGLLVYPTMVLHLDVGRDKSVQALEQAMMHDHMIFLATQQDISIDEPGEDEIFTVGTYTKIKQMLKLPNGTIRVLVEGLKRAHIVKYNEHEDYTSVDIQLIHEDDSKDTEDEALMRTLLDHFDQYIKISKKISAETYAAVTDIEEPGRMADIVASHLPLKLKDKQDILETADVKDRLNKVIDFINNEKEVLEIEKKIGQRVKRSMERTQKEYYLREQMKAIQKELGDKEGKTGEVQTLTEKIEEAGMPDHVKETALKELNRYEKIPSSSAESSVIRNYIDWLVALPWTDETDDKLDLKEAGRLLDEEHHGLEKVKERILEYLAVQKLTKSLKGPILCLAGPPGVGKTSLAKSIAKSLGRKFVRISLGGVRDESEIRGHRRTYVGAMPGRIIQGMKKAGKLNPVFLLDEIDKMSSDFRGDPSSAMLEVLDPEQNSSFSDHYIEETFDLSKVLFIATANNLATIPGPLRDRMEIINIAGYTEIEKLEIVKDHLLPKQIKEHGLKKSNLQLRDQAILDIIRYYTREAGVRSLERQLAAICRKAAKAIVAEERKRITVTEKNLQDFIGKRIFRYGQAETEDQVGVVTGLAYTTVGGDTLSIEVSLSPGKGKLILTGKLGDVMRESAQAAFSYVRSKTEELGIEPDFHEKYDIHIHVPEGAVPKDGPSAGITMATALVSALTGRAVSREVGMTGEITLRGRVLPIGGLKEKALGAHRAGLTTIIAPKDNEKDIEDIPESVREGLTFILASHLDEVLEHALVGEKK</sequence>
<evidence type="ECO:0000255" key="1">
    <source>
        <dbReference type="HAMAP-Rule" id="MF_01973"/>
    </source>
</evidence>
<evidence type="ECO:0000255" key="2">
    <source>
        <dbReference type="PROSITE-ProRule" id="PRU01122"/>
    </source>
</evidence>
<evidence type="ECO:0000255" key="3">
    <source>
        <dbReference type="PROSITE-ProRule" id="PRU01123"/>
    </source>
</evidence>
<evidence type="ECO:0000269" key="4">
    <source>
    </source>
</evidence>
<evidence type="ECO:0000269" key="5">
    <source>
    </source>
</evidence>
<evidence type="ECO:0007829" key="6">
    <source>
        <dbReference type="PDB" id="1X37"/>
    </source>
</evidence>
<evidence type="ECO:0007829" key="7">
    <source>
        <dbReference type="PDB" id="3M65"/>
    </source>
</evidence>
<evidence type="ECO:0007829" key="8">
    <source>
        <dbReference type="PDB" id="3M6A"/>
    </source>
</evidence>
<gene>
    <name evidence="1" type="primary">lon1</name>
    <name type="synonym">lonA</name>
    <name type="ordered locus">BSU28200</name>
</gene>
<reference key="1">
    <citation type="journal article" date="1994" name="J. Bacteriol.">
        <title>Cloning, nucleotide sequence, and expression of the Bacillus subtilis lon gene.</title>
        <authorList>
            <person name="Riethdorf S."/>
            <person name="Voelker U."/>
            <person name="Gerth U."/>
            <person name="Winkler A."/>
            <person name="Engelmann S."/>
            <person name="Hecker M."/>
        </authorList>
    </citation>
    <scope>NUCLEOTIDE SEQUENCE [GENOMIC DNA]</scope>
    <scope>INDUCTION</scope>
    <source>
        <strain>168 / IS58</strain>
    </source>
</reference>
<reference key="2">
    <citation type="journal article" date="1996" name="Microbiology">
        <title>The dnaB-pheA (256 degrees-240 degrees) region of the Bacillus subtilis chromosome containing genes responsible for stress responses, the utilization of plant cell walls and primary metabolism.</title>
        <authorList>
            <person name="Wipat A."/>
            <person name="Carter N."/>
            <person name="Brignell C.S."/>
            <person name="Guy J.B."/>
            <person name="Piper K."/>
            <person name="Sanders J."/>
            <person name="Emmerson P.T."/>
            <person name="Harwood C.R."/>
        </authorList>
    </citation>
    <scope>NUCLEOTIDE SEQUENCE [GENOMIC DNA]</scope>
    <source>
        <strain>168</strain>
    </source>
</reference>
<reference key="3">
    <citation type="journal article" date="1997" name="Nature">
        <title>The complete genome sequence of the Gram-positive bacterium Bacillus subtilis.</title>
        <authorList>
            <person name="Kunst F."/>
            <person name="Ogasawara N."/>
            <person name="Moszer I."/>
            <person name="Albertini A.M."/>
            <person name="Alloni G."/>
            <person name="Azevedo V."/>
            <person name="Bertero M.G."/>
            <person name="Bessieres P."/>
            <person name="Bolotin A."/>
            <person name="Borchert S."/>
            <person name="Borriss R."/>
            <person name="Boursier L."/>
            <person name="Brans A."/>
            <person name="Braun M."/>
            <person name="Brignell S.C."/>
            <person name="Bron S."/>
            <person name="Brouillet S."/>
            <person name="Bruschi C.V."/>
            <person name="Caldwell B."/>
            <person name="Capuano V."/>
            <person name="Carter N.M."/>
            <person name="Choi S.-K."/>
            <person name="Codani J.-J."/>
            <person name="Connerton I.F."/>
            <person name="Cummings N.J."/>
            <person name="Daniel R.A."/>
            <person name="Denizot F."/>
            <person name="Devine K.M."/>
            <person name="Duesterhoeft A."/>
            <person name="Ehrlich S.D."/>
            <person name="Emmerson P.T."/>
            <person name="Entian K.-D."/>
            <person name="Errington J."/>
            <person name="Fabret C."/>
            <person name="Ferrari E."/>
            <person name="Foulger D."/>
            <person name="Fritz C."/>
            <person name="Fujita M."/>
            <person name="Fujita Y."/>
            <person name="Fuma S."/>
            <person name="Galizzi A."/>
            <person name="Galleron N."/>
            <person name="Ghim S.-Y."/>
            <person name="Glaser P."/>
            <person name="Goffeau A."/>
            <person name="Golightly E.J."/>
            <person name="Grandi G."/>
            <person name="Guiseppi G."/>
            <person name="Guy B.J."/>
            <person name="Haga K."/>
            <person name="Haiech J."/>
            <person name="Harwood C.R."/>
            <person name="Henaut A."/>
            <person name="Hilbert H."/>
            <person name="Holsappel S."/>
            <person name="Hosono S."/>
            <person name="Hullo M.-F."/>
            <person name="Itaya M."/>
            <person name="Jones L.-M."/>
            <person name="Joris B."/>
            <person name="Karamata D."/>
            <person name="Kasahara Y."/>
            <person name="Klaerr-Blanchard M."/>
            <person name="Klein C."/>
            <person name="Kobayashi Y."/>
            <person name="Koetter P."/>
            <person name="Koningstein G."/>
            <person name="Krogh S."/>
            <person name="Kumano M."/>
            <person name="Kurita K."/>
            <person name="Lapidus A."/>
            <person name="Lardinois S."/>
            <person name="Lauber J."/>
            <person name="Lazarevic V."/>
            <person name="Lee S.-M."/>
            <person name="Levine A."/>
            <person name="Liu H."/>
            <person name="Masuda S."/>
            <person name="Mauel C."/>
            <person name="Medigue C."/>
            <person name="Medina N."/>
            <person name="Mellado R.P."/>
            <person name="Mizuno M."/>
            <person name="Moestl D."/>
            <person name="Nakai S."/>
            <person name="Noback M."/>
            <person name="Noone D."/>
            <person name="O'Reilly M."/>
            <person name="Ogawa K."/>
            <person name="Ogiwara A."/>
            <person name="Oudega B."/>
            <person name="Park S.-H."/>
            <person name="Parro V."/>
            <person name="Pohl T.M."/>
            <person name="Portetelle D."/>
            <person name="Porwollik S."/>
            <person name="Prescott A.M."/>
            <person name="Presecan E."/>
            <person name="Pujic P."/>
            <person name="Purnelle B."/>
            <person name="Rapoport G."/>
            <person name="Rey M."/>
            <person name="Reynolds S."/>
            <person name="Rieger M."/>
            <person name="Rivolta C."/>
            <person name="Rocha E."/>
            <person name="Roche B."/>
            <person name="Rose M."/>
            <person name="Sadaie Y."/>
            <person name="Sato T."/>
            <person name="Scanlan E."/>
            <person name="Schleich S."/>
            <person name="Schroeter R."/>
            <person name="Scoffone F."/>
            <person name="Sekiguchi J."/>
            <person name="Sekowska A."/>
            <person name="Seror S.J."/>
            <person name="Serror P."/>
            <person name="Shin B.-S."/>
            <person name="Soldo B."/>
            <person name="Sorokin A."/>
            <person name="Tacconi E."/>
            <person name="Takagi T."/>
            <person name="Takahashi H."/>
            <person name="Takemaru K."/>
            <person name="Takeuchi M."/>
            <person name="Tamakoshi A."/>
            <person name="Tanaka T."/>
            <person name="Terpstra P."/>
            <person name="Tognoni A."/>
            <person name="Tosato V."/>
            <person name="Uchiyama S."/>
            <person name="Vandenbol M."/>
            <person name="Vannier F."/>
            <person name="Vassarotti A."/>
            <person name="Viari A."/>
            <person name="Wambutt R."/>
            <person name="Wedler E."/>
            <person name="Wedler H."/>
            <person name="Weitzenegger T."/>
            <person name="Winters P."/>
            <person name="Wipat A."/>
            <person name="Yamamoto H."/>
            <person name="Yamane K."/>
            <person name="Yasumoto K."/>
            <person name="Yata K."/>
            <person name="Yoshida K."/>
            <person name="Yoshikawa H.-F."/>
            <person name="Zumstein E."/>
            <person name="Yoshikawa H."/>
            <person name="Danchin A."/>
        </authorList>
    </citation>
    <scope>NUCLEOTIDE SEQUENCE [LARGE SCALE GENOMIC DNA]</scope>
    <source>
        <strain>168</strain>
    </source>
</reference>
<reference key="4">
    <citation type="journal article" date="2007" name="Biomol. NMR. Assign.">
        <title>(1)H, (13)C and (15)N resonance assignments of alpha-domain for Bacillus subtilis Lon protease.</title>
        <authorList>
            <person name="Wang I."/>
            <person name="Lou Y.C."/>
            <person name="Lin Y.C."/>
            <person name="Lo S.C."/>
            <person name="Lee A.Y."/>
            <person name="Wu S.H."/>
            <person name="Chen C."/>
        </authorList>
    </citation>
    <scope>STRUCTURE BY NMR OF 490-604</scope>
</reference>
<reference key="5">
    <citation type="journal article" date="2010" name="J. Mol. Biol.">
        <title>Crystal structures of Bacillus subtilis Lon protease.</title>
        <authorList>
            <person name="Duman R.E."/>
            <person name="Loewe J."/>
        </authorList>
    </citation>
    <scope>X-RAY CRYSTALLOGRAPHY (2.6 ANGSTROMS) OF 1-209 IN COMPLEX WITH ADP</scope>
    <scope>SUBUNIT</scope>
</reference>
<name>LON1_BACSU</name>
<organism>
    <name type="scientific">Bacillus subtilis (strain 168)</name>
    <dbReference type="NCBI Taxonomy" id="224308"/>
    <lineage>
        <taxon>Bacteria</taxon>
        <taxon>Bacillati</taxon>
        <taxon>Bacillota</taxon>
        <taxon>Bacilli</taxon>
        <taxon>Bacillales</taxon>
        <taxon>Bacillaceae</taxon>
        <taxon>Bacillus</taxon>
    </lineage>
</organism>
<dbReference type="EC" id="3.4.21.53" evidence="1"/>
<dbReference type="EMBL" id="X76424">
    <property type="protein sequence ID" value="CAA53984.1"/>
    <property type="molecule type" value="Genomic_DNA"/>
</dbReference>
<dbReference type="EMBL" id="Z75208">
    <property type="protein sequence ID" value="CAA99540.1"/>
    <property type="molecule type" value="Genomic_DNA"/>
</dbReference>
<dbReference type="EMBL" id="AL009126">
    <property type="protein sequence ID" value="CAB14780.1"/>
    <property type="molecule type" value="Genomic_DNA"/>
</dbReference>
<dbReference type="PIR" id="I40421">
    <property type="entry name" value="I40421"/>
</dbReference>
<dbReference type="RefSeq" id="NP_390698.1">
    <property type="nucleotide sequence ID" value="NC_000964.3"/>
</dbReference>
<dbReference type="PDB" id="1X37">
    <property type="method" value="NMR"/>
    <property type="chains" value="A=490-604"/>
</dbReference>
<dbReference type="PDB" id="3M65">
    <property type="method" value="X-ray"/>
    <property type="resolution" value="2.60 A"/>
    <property type="chains" value="A/B=1-209"/>
</dbReference>
<dbReference type="PDB" id="3M6A">
    <property type="method" value="X-ray"/>
    <property type="resolution" value="3.40 A"/>
    <property type="chains" value="A/B/C/D/E/F=240-774"/>
</dbReference>
<dbReference type="PDBsum" id="1X37"/>
<dbReference type="PDBsum" id="3M65"/>
<dbReference type="PDBsum" id="3M6A"/>
<dbReference type="BMRB" id="P37945"/>
<dbReference type="SMR" id="P37945"/>
<dbReference type="FunCoup" id="P37945">
    <property type="interactions" value="637"/>
</dbReference>
<dbReference type="IntAct" id="P37945">
    <property type="interactions" value="2"/>
</dbReference>
<dbReference type="MINT" id="P37945"/>
<dbReference type="STRING" id="224308.BSU28200"/>
<dbReference type="MEROPS" id="S16.001"/>
<dbReference type="PaxDb" id="224308-BSU28200"/>
<dbReference type="EnsemblBacteria" id="CAB14780">
    <property type="protein sequence ID" value="CAB14780"/>
    <property type="gene ID" value="BSU_28200"/>
</dbReference>
<dbReference type="GeneID" id="937486"/>
<dbReference type="KEGG" id="bsu:BSU28200"/>
<dbReference type="PATRIC" id="fig|224308.179.peg.3063"/>
<dbReference type="eggNOG" id="COG0466">
    <property type="taxonomic scope" value="Bacteria"/>
</dbReference>
<dbReference type="InParanoid" id="P37945"/>
<dbReference type="OrthoDB" id="9803599at2"/>
<dbReference type="PhylomeDB" id="P37945"/>
<dbReference type="BioCyc" id="BSUB:BSU28200-MONOMER"/>
<dbReference type="BRENDA" id="3.4.21.53">
    <property type="organism ID" value="658"/>
</dbReference>
<dbReference type="EvolutionaryTrace" id="P37945"/>
<dbReference type="Proteomes" id="UP000001570">
    <property type="component" value="Chromosome"/>
</dbReference>
<dbReference type="GO" id="GO:0005737">
    <property type="term" value="C:cytoplasm"/>
    <property type="evidence" value="ECO:0007669"/>
    <property type="project" value="UniProtKB-SubCell"/>
</dbReference>
<dbReference type="GO" id="GO:0005524">
    <property type="term" value="F:ATP binding"/>
    <property type="evidence" value="ECO:0007669"/>
    <property type="project" value="UniProtKB-UniRule"/>
</dbReference>
<dbReference type="GO" id="GO:0016887">
    <property type="term" value="F:ATP hydrolysis activity"/>
    <property type="evidence" value="ECO:0007669"/>
    <property type="project" value="UniProtKB-UniRule"/>
</dbReference>
<dbReference type="GO" id="GO:0004176">
    <property type="term" value="F:ATP-dependent peptidase activity"/>
    <property type="evidence" value="ECO:0007669"/>
    <property type="project" value="UniProtKB-UniRule"/>
</dbReference>
<dbReference type="GO" id="GO:0043565">
    <property type="term" value="F:sequence-specific DNA binding"/>
    <property type="evidence" value="ECO:0007669"/>
    <property type="project" value="UniProtKB-UniRule"/>
</dbReference>
<dbReference type="GO" id="GO:0004252">
    <property type="term" value="F:serine-type endopeptidase activity"/>
    <property type="evidence" value="ECO:0007669"/>
    <property type="project" value="UniProtKB-UniRule"/>
</dbReference>
<dbReference type="GO" id="GO:0034605">
    <property type="term" value="P:cellular response to heat"/>
    <property type="evidence" value="ECO:0007669"/>
    <property type="project" value="UniProtKB-UniRule"/>
</dbReference>
<dbReference type="GO" id="GO:0006515">
    <property type="term" value="P:protein quality control for misfolded or incompletely synthesized proteins"/>
    <property type="evidence" value="ECO:0007669"/>
    <property type="project" value="UniProtKB-UniRule"/>
</dbReference>
<dbReference type="CDD" id="cd19500">
    <property type="entry name" value="RecA-like_Lon"/>
    <property type="match status" value="1"/>
</dbReference>
<dbReference type="FunFam" id="3.30.230.10:FF:000010">
    <property type="entry name" value="Lon protease"/>
    <property type="match status" value="1"/>
</dbReference>
<dbReference type="FunFam" id="1.20.5.5270:FF:000002">
    <property type="entry name" value="Lon protease homolog"/>
    <property type="match status" value="1"/>
</dbReference>
<dbReference type="FunFam" id="3.40.50.300:FF:000382">
    <property type="entry name" value="Lon protease homolog 2, peroxisomal"/>
    <property type="match status" value="1"/>
</dbReference>
<dbReference type="Gene3D" id="1.10.8.60">
    <property type="match status" value="1"/>
</dbReference>
<dbReference type="Gene3D" id="1.20.5.5270">
    <property type="match status" value="1"/>
</dbReference>
<dbReference type="Gene3D" id="1.20.58.1480">
    <property type="match status" value="1"/>
</dbReference>
<dbReference type="Gene3D" id="3.30.230.10">
    <property type="match status" value="1"/>
</dbReference>
<dbReference type="Gene3D" id="2.30.130.40">
    <property type="entry name" value="LON domain-like"/>
    <property type="match status" value="1"/>
</dbReference>
<dbReference type="Gene3D" id="3.40.50.300">
    <property type="entry name" value="P-loop containing nucleotide triphosphate hydrolases"/>
    <property type="match status" value="1"/>
</dbReference>
<dbReference type="HAMAP" id="MF_01973">
    <property type="entry name" value="lon_bact"/>
    <property type="match status" value="1"/>
</dbReference>
<dbReference type="InterPro" id="IPR003593">
    <property type="entry name" value="AAA+_ATPase"/>
</dbReference>
<dbReference type="InterPro" id="IPR003959">
    <property type="entry name" value="ATPase_AAA_core"/>
</dbReference>
<dbReference type="InterPro" id="IPR027543">
    <property type="entry name" value="Lon_bac"/>
</dbReference>
<dbReference type="InterPro" id="IPR004815">
    <property type="entry name" value="Lon_bac/euk-typ"/>
</dbReference>
<dbReference type="InterPro" id="IPR054594">
    <property type="entry name" value="Lon_lid"/>
</dbReference>
<dbReference type="InterPro" id="IPR008269">
    <property type="entry name" value="Lon_proteolytic"/>
</dbReference>
<dbReference type="InterPro" id="IPR027065">
    <property type="entry name" value="Lon_Prtase"/>
</dbReference>
<dbReference type="InterPro" id="IPR003111">
    <property type="entry name" value="Lon_prtase_N"/>
</dbReference>
<dbReference type="InterPro" id="IPR046336">
    <property type="entry name" value="Lon_prtase_N_sf"/>
</dbReference>
<dbReference type="InterPro" id="IPR027417">
    <property type="entry name" value="P-loop_NTPase"/>
</dbReference>
<dbReference type="InterPro" id="IPR008268">
    <property type="entry name" value="Peptidase_S16_AS"/>
</dbReference>
<dbReference type="InterPro" id="IPR015947">
    <property type="entry name" value="PUA-like_sf"/>
</dbReference>
<dbReference type="InterPro" id="IPR020568">
    <property type="entry name" value="Ribosomal_Su5_D2-typ_SF"/>
</dbReference>
<dbReference type="InterPro" id="IPR014721">
    <property type="entry name" value="Ribsml_uS5_D2-typ_fold_subgr"/>
</dbReference>
<dbReference type="NCBIfam" id="TIGR00763">
    <property type="entry name" value="lon"/>
    <property type="match status" value="1"/>
</dbReference>
<dbReference type="NCBIfam" id="NF008053">
    <property type="entry name" value="PRK10787.1"/>
    <property type="match status" value="1"/>
</dbReference>
<dbReference type="PANTHER" id="PTHR10046">
    <property type="entry name" value="ATP DEPENDENT LON PROTEASE FAMILY MEMBER"/>
    <property type="match status" value="1"/>
</dbReference>
<dbReference type="Pfam" id="PF00004">
    <property type="entry name" value="AAA"/>
    <property type="match status" value="1"/>
</dbReference>
<dbReference type="Pfam" id="PF05362">
    <property type="entry name" value="Lon_C"/>
    <property type="match status" value="1"/>
</dbReference>
<dbReference type="Pfam" id="PF22667">
    <property type="entry name" value="Lon_lid"/>
    <property type="match status" value="1"/>
</dbReference>
<dbReference type="Pfam" id="PF02190">
    <property type="entry name" value="LON_substr_bdg"/>
    <property type="match status" value="1"/>
</dbReference>
<dbReference type="PIRSF" id="PIRSF001174">
    <property type="entry name" value="Lon_proteas"/>
    <property type="match status" value="1"/>
</dbReference>
<dbReference type="PRINTS" id="PR00830">
    <property type="entry name" value="ENDOLAPTASE"/>
</dbReference>
<dbReference type="SMART" id="SM00382">
    <property type="entry name" value="AAA"/>
    <property type="match status" value="1"/>
</dbReference>
<dbReference type="SMART" id="SM00464">
    <property type="entry name" value="LON"/>
    <property type="match status" value="1"/>
</dbReference>
<dbReference type="SUPFAM" id="SSF52540">
    <property type="entry name" value="P-loop containing nucleoside triphosphate hydrolases"/>
    <property type="match status" value="1"/>
</dbReference>
<dbReference type="SUPFAM" id="SSF88697">
    <property type="entry name" value="PUA domain-like"/>
    <property type="match status" value="1"/>
</dbReference>
<dbReference type="SUPFAM" id="SSF54211">
    <property type="entry name" value="Ribosomal protein S5 domain 2-like"/>
    <property type="match status" value="1"/>
</dbReference>
<dbReference type="PROSITE" id="PS51787">
    <property type="entry name" value="LON_N"/>
    <property type="match status" value="1"/>
</dbReference>
<dbReference type="PROSITE" id="PS51786">
    <property type="entry name" value="LON_PROTEOLYTIC"/>
    <property type="match status" value="1"/>
</dbReference>
<dbReference type="PROSITE" id="PS01046">
    <property type="entry name" value="LON_SER"/>
    <property type="match status" value="1"/>
</dbReference>
<keyword id="KW-0002">3D-structure</keyword>
<keyword id="KW-0067">ATP-binding</keyword>
<keyword id="KW-0963">Cytoplasm</keyword>
<keyword id="KW-0378">Hydrolase</keyword>
<keyword id="KW-0547">Nucleotide-binding</keyword>
<keyword id="KW-0645">Protease</keyword>
<keyword id="KW-1185">Reference proteome</keyword>
<keyword id="KW-0720">Serine protease</keyword>
<keyword id="KW-0346">Stress response</keyword>
<accession>P37945</accession>
<protein>
    <recommendedName>
        <fullName evidence="1">Lon protease 1</fullName>
        <ecNumber evidence="1">3.4.21.53</ecNumber>
    </recommendedName>
    <alternativeName>
        <fullName evidence="1">ATP-dependent protease La 1</fullName>
    </alternativeName>
</protein>